<reference key="1">
    <citation type="journal article" date="1990" name="J. Bacteriol.">
        <title>Sulfate and thiosulfate transport in Escherichia coli K-12: nucleotide sequence and expression of the cysTWAM gene cluster.</title>
        <authorList>
            <person name="Sirko A."/>
            <person name="Hryniewicz M.M."/>
            <person name="Hulanicka D.M."/>
            <person name="Boeck A."/>
        </authorList>
    </citation>
    <scope>NUCLEOTIDE SEQUENCE [GENOMIC DNA]</scope>
    <source>
        <strain>K12</strain>
    </source>
</reference>
<reference key="2">
    <citation type="journal article" date="1997" name="DNA Res.">
        <title>Construction of a contiguous 874-kb sequence of the Escherichia coli-K12 genome corresponding to 50.0-68.8 min on the linkage map and analysis of its sequence features.</title>
        <authorList>
            <person name="Yamamoto Y."/>
            <person name="Aiba H."/>
            <person name="Baba T."/>
            <person name="Hayashi K."/>
            <person name="Inada T."/>
            <person name="Isono K."/>
            <person name="Itoh T."/>
            <person name="Kimura S."/>
            <person name="Kitagawa M."/>
            <person name="Makino K."/>
            <person name="Miki T."/>
            <person name="Mitsuhashi N."/>
            <person name="Mizobuchi K."/>
            <person name="Mori H."/>
            <person name="Nakade S."/>
            <person name="Nakamura Y."/>
            <person name="Nashimoto H."/>
            <person name="Oshima T."/>
            <person name="Oyama S."/>
            <person name="Saito N."/>
            <person name="Sampei G."/>
            <person name="Satoh Y."/>
            <person name="Sivasundaram S."/>
            <person name="Tagami H."/>
            <person name="Takahashi H."/>
            <person name="Takeda J."/>
            <person name="Takemoto K."/>
            <person name="Uehara K."/>
            <person name="Wada C."/>
            <person name="Yamagata S."/>
            <person name="Horiuchi T."/>
        </authorList>
    </citation>
    <scope>NUCLEOTIDE SEQUENCE [LARGE SCALE GENOMIC DNA]</scope>
    <source>
        <strain>K12 / W3110 / ATCC 27325 / DSM 5911</strain>
    </source>
</reference>
<reference key="3">
    <citation type="journal article" date="1997" name="Science">
        <title>The complete genome sequence of Escherichia coli K-12.</title>
        <authorList>
            <person name="Blattner F.R."/>
            <person name="Plunkett G. III"/>
            <person name="Bloch C.A."/>
            <person name="Perna N.T."/>
            <person name="Burland V."/>
            <person name="Riley M."/>
            <person name="Collado-Vides J."/>
            <person name="Glasner J.D."/>
            <person name="Rode C.K."/>
            <person name="Mayhew G.F."/>
            <person name="Gregor J."/>
            <person name="Davis N.W."/>
            <person name="Kirkpatrick H.A."/>
            <person name="Goeden M.A."/>
            <person name="Rose D.J."/>
            <person name="Mau B."/>
            <person name="Shao Y."/>
        </authorList>
    </citation>
    <scope>NUCLEOTIDE SEQUENCE [LARGE SCALE GENOMIC DNA]</scope>
    <source>
        <strain>K12 / MG1655 / ATCC 47076</strain>
    </source>
</reference>
<reference key="4">
    <citation type="journal article" date="2006" name="Mol. Syst. Biol.">
        <title>Highly accurate genome sequences of Escherichia coli K-12 strains MG1655 and W3110.</title>
        <authorList>
            <person name="Hayashi K."/>
            <person name="Morooka N."/>
            <person name="Yamamoto Y."/>
            <person name="Fujita K."/>
            <person name="Isono K."/>
            <person name="Choi S."/>
            <person name="Ohtsubo E."/>
            <person name="Baba T."/>
            <person name="Wanner B.L."/>
            <person name="Mori H."/>
            <person name="Horiuchi T."/>
        </authorList>
    </citation>
    <scope>NUCLEOTIDE SEQUENCE [LARGE SCALE GENOMIC DNA]</scope>
    <source>
        <strain>K12 / W3110 / ATCC 27325 / DSM 5911</strain>
    </source>
</reference>
<reference key="5">
    <citation type="journal article" date="2005" name="Science">
        <title>Global topology analysis of the Escherichia coli inner membrane proteome.</title>
        <authorList>
            <person name="Daley D.O."/>
            <person name="Rapp M."/>
            <person name="Granseth E."/>
            <person name="Melen K."/>
            <person name="Drew D."/>
            <person name="von Heijne G."/>
        </authorList>
    </citation>
    <scope>TOPOLOGY [LARGE SCALE ANALYSIS]</scope>
    <source>
        <strain>K12 / MG1655 / ATCC 47076</strain>
    </source>
</reference>
<dbReference type="EMBL" id="M32101">
    <property type="protein sequence ID" value="AAA23638.1"/>
    <property type="molecule type" value="Genomic_DNA"/>
</dbReference>
<dbReference type="EMBL" id="U00096">
    <property type="protein sequence ID" value="AAC75476.2"/>
    <property type="molecule type" value="Genomic_DNA"/>
</dbReference>
<dbReference type="EMBL" id="AP009048">
    <property type="protein sequence ID" value="BAA16297.1"/>
    <property type="molecule type" value="Genomic_DNA"/>
</dbReference>
<dbReference type="PIR" id="F65016">
    <property type="entry name" value="QRECSW"/>
</dbReference>
<dbReference type="RefSeq" id="WP_000852686.1">
    <property type="nucleotide sequence ID" value="NZ_STEB01000039.1"/>
</dbReference>
<dbReference type="RefSeq" id="YP_026168.2">
    <property type="nucleotide sequence ID" value="NC_000913.3"/>
</dbReference>
<dbReference type="SMR" id="P0AEB0"/>
<dbReference type="BioGRID" id="4260746">
    <property type="interactions" value="9"/>
</dbReference>
<dbReference type="ComplexPortal" id="CPX-4385">
    <property type="entry name" value="Sulfate/thiosulfate ABC transporter complex, cypP variant"/>
</dbReference>
<dbReference type="ComplexPortal" id="CPX-4386">
    <property type="entry name" value="Sulfate/thiosulfate ABC transporter complex, sbp variant"/>
</dbReference>
<dbReference type="DIP" id="DIP-9388N"/>
<dbReference type="FunCoup" id="P0AEB0">
    <property type="interactions" value="416"/>
</dbReference>
<dbReference type="IntAct" id="P0AEB0">
    <property type="interactions" value="2"/>
</dbReference>
<dbReference type="STRING" id="511145.b2423"/>
<dbReference type="TCDB" id="3.A.1.6.1">
    <property type="family name" value="the atp-binding cassette (abc) superfamily"/>
</dbReference>
<dbReference type="PaxDb" id="511145-b2423"/>
<dbReference type="EnsemblBacteria" id="AAC75476">
    <property type="protein sequence ID" value="AAC75476"/>
    <property type="gene ID" value="b2423"/>
</dbReference>
<dbReference type="GeneID" id="2847743"/>
<dbReference type="GeneID" id="93774708"/>
<dbReference type="KEGG" id="ecj:JW2416"/>
<dbReference type="KEGG" id="eco:b2423"/>
<dbReference type="KEGG" id="ecoc:C3026_13465"/>
<dbReference type="PATRIC" id="fig|1411691.4.peg.4308"/>
<dbReference type="EchoBASE" id="EB0195"/>
<dbReference type="eggNOG" id="COG4208">
    <property type="taxonomic scope" value="Bacteria"/>
</dbReference>
<dbReference type="HOGENOM" id="CLU_016047_14_0_6"/>
<dbReference type="InParanoid" id="P0AEB0"/>
<dbReference type="OMA" id="TRFQFPG"/>
<dbReference type="OrthoDB" id="9774448at2"/>
<dbReference type="PhylomeDB" id="P0AEB0"/>
<dbReference type="BioCyc" id="EcoCyc:CYSW-MONOMER"/>
<dbReference type="BioCyc" id="MetaCyc:CYSW-MONOMER"/>
<dbReference type="PRO" id="PR:P0AEB0"/>
<dbReference type="Proteomes" id="UP000000625">
    <property type="component" value="Chromosome"/>
</dbReference>
<dbReference type="GO" id="GO:0035796">
    <property type="term" value="C:ATP-binding cassette (ABC) transporter complex, transmembrane substrate-binding subunit-containing"/>
    <property type="evidence" value="ECO:0000303"/>
    <property type="project" value="ComplexPortal"/>
</dbReference>
<dbReference type="GO" id="GO:0016020">
    <property type="term" value="C:membrane"/>
    <property type="evidence" value="ECO:0000303"/>
    <property type="project" value="ComplexPortal"/>
</dbReference>
<dbReference type="GO" id="GO:0005886">
    <property type="term" value="C:plasma membrane"/>
    <property type="evidence" value="ECO:0000314"/>
    <property type="project" value="EcoCyc"/>
</dbReference>
<dbReference type="GO" id="GO:0015419">
    <property type="term" value="F:ABC-type sulfate transporter activity"/>
    <property type="evidence" value="ECO:0007669"/>
    <property type="project" value="InterPro"/>
</dbReference>
<dbReference type="GO" id="GO:1902358">
    <property type="term" value="P:sulfate transmembrane transport"/>
    <property type="evidence" value="ECO:0000303"/>
    <property type="project" value="ComplexPortal"/>
</dbReference>
<dbReference type="GO" id="GO:0015709">
    <property type="term" value="P:thiosulfate transport"/>
    <property type="evidence" value="ECO:0000303"/>
    <property type="project" value="ComplexPortal"/>
</dbReference>
<dbReference type="CDD" id="cd06261">
    <property type="entry name" value="TM_PBP2"/>
    <property type="match status" value="1"/>
</dbReference>
<dbReference type="FunFam" id="1.10.3720.10:FF:000015">
    <property type="entry name" value="Sulfate ABC transporter, permease CysW"/>
    <property type="match status" value="1"/>
</dbReference>
<dbReference type="Gene3D" id="1.10.3720.10">
    <property type="entry name" value="MetI-like"/>
    <property type="match status" value="1"/>
</dbReference>
<dbReference type="InterPro" id="IPR011866">
    <property type="entry name" value="CysW_permease"/>
</dbReference>
<dbReference type="InterPro" id="IPR000515">
    <property type="entry name" value="MetI-like"/>
</dbReference>
<dbReference type="InterPro" id="IPR035906">
    <property type="entry name" value="MetI-like_sf"/>
</dbReference>
<dbReference type="InterPro" id="IPR005667">
    <property type="entry name" value="Sulph_transpt2"/>
</dbReference>
<dbReference type="NCBIfam" id="TIGR00969">
    <property type="entry name" value="3a0106s02"/>
    <property type="match status" value="1"/>
</dbReference>
<dbReference type="NCBIfam" id="TIGR02140">
    <property type="entry name" value="permease_CysW"/>
    <property type="match status" value="1"/>
</dbReference>
<dbReference type="NCBIfam" id="NF008620">
    <property type="entry name" value="PRK11602.1"/>
    <property type="match status" value="1"/>
</dbReference>
<dbReference type="PANTHER" id="PTHR30406">
    <property type="entry name" value="SULFATE TRANSPORT SYSTEM PERMEASE PROTEIN"/>
    <property type="match status" value="1"/>
</dbReference>
<dbReference type="PANTHER" id="PTHR30406:SF9">
    <property type="entry name" value="SULFATE TRANSPORT SYSTEM PERMEASE PROTEIN CYSW"/>
    <property type="match status" value="1"/>
</dbReference>
<dbReference type="Pfam" id="PF00528">
    <property type="entry name" value="BPD_transp_1"/>
    <property type="match status" value="1"/>
</dbReference>
<dbReference type="SUPFAM" id="SSF161098">
    <property type="entry name" value="MetI-like"/>
    <property type="match status" value="1"/>
</dbReference>
<dbReference type="PROSITE" id="PS50928">
    <property type="entry name" value="ABC_TM1"/>
    <property type="match status" value="1"/>
</dbReference>
<proteinExistence type="evidence at protein level"/>
<keyword id="KW-0997">Cell inner membrane</keyword>
<keyword id="KW-1003">Cell membrane</keyword>
<keyword id="KW-0472">Membrane</keyword>
<keyword id="KW-1185">Reference proteome</keyword>
<keyword id="KW-0764">Sulfate transport</keyword>
<keyword id="KW-0812">Transmembrane</keyword>
<keyword id="KW-1133">Transmembrane helix</keyword>
<keyword id="KW-0813">Transport</keyword>
<sequence>MAEVTQLKRYDARPINWGKWFLIGIGMLVSAFILLVPMIYIFVQAFSKGLMPVLQNLADPDMLHAIWLTVMIALIAVPVNLVFGILLAWLVTRFNFPGRQLLLTLLDIPFAVSPVVAGLVYLLFYGSNGPLGGWLDEHNLQIMFSWPGMVLVTIFVTCPFVVRELVPVMLSQGSQEDEAAILLGASGWQMFRRVTLPNIRWALLYGVVLTNARAIGEFGAVSVVSGSIRGETLSLPLQIELLEQDYNTVGSFTAAALLTLMAIITLFLKSMLQWRLENQEKRAQQEEHHEH</sequence>
<comment type="function">
    <text>Part of the ABC transporter complex CysAWTP (TC 3.A.1.6.1) involved in sulfate/thiosulfate import. Probably responsible for the translocation of the substrate across the membrane.</text>
</comment>
<comment type="subunit">
    <text evidence="3">The complex is composed of two ATP-binding proteins (CysA), two transmembrane proteins (CysT and CysW) and a solute-binding protein (CysP).</text>
</comment>
<comment type="subcellular location">
    <subcellularLocation>
        <location>Cell inner membrane</location>
        <topology>Multi-pass membrane protein</topology>
    </subcellularLocation>
</comment>
<comment type="similarity">
    <text evidence="3">Belongs to the binding-protein-dependent transport system permease family. CysTW subfamily.</text>
</comment>
<gene>
    <name type="primary">cysW</name>
    <name type="ordered locus">b2423</name>
    <name type="ordered locus">JW2416</name>
</gene>
<name>CYSW_ECOLI</name>
<protein>
    <recommendedName>
        <fullName>Sulfate transport system permease protein CysW</fullName>
    </recommendedName>
</protein>
<accession>P0AEB0</accession>
<accession>P16702</accession>
<accession>P76534</accession>
<organism>
    <name type="scientific">Escherichia coli (strain K12)</name>
    <dbReference type="NCBI Taxonomy" id="83333"/>
    <lineage>
        <taxon>Bacteria</taxon>
        <taxon>Pseudomonadati</taxon>
        <taxon>Pseudomonadota</taxon>
        <taxon>Gammaproteobacteria</taxon>
        <taxon>Enterobacterales</taxon>
        <taxon>Enterobacteriaceae</taxon>
        <taxon>Escherichia</taxon>
    </lineage>
</organism>
<evidence type="ECO:0000255" key="1"/>
<evidence type="ECO:0000255" key="2">
    <source>
        <dbReference type="PROSITE-ProRule" id="PRU00441"/>
    </source>
</evidence>
<evidence type="ECO:0000305" key="3"/>
<feature type="chain" id="PRO_0000059997" description="Sulfate transport system permease protein CysW">
    <location>
        <begin position="1"/>
        <end position="291"/>
    </location>
</feature>
<feature type="topological domain" description="Cytoplasmic" evidence="1">
    <location>
        <begin position="1"/>
        <end position="22"/>
    </location>
</feature>
<feature type="transmembrane region" description="Helical" evidence="2">
    <location>
        <begin position="23"/>
        <end position="43"/>
    </location>
</feature>
<feature type="topological domain" description="Periplasmic" evidence="1">
    <location>
        <begin position="44"/>
        <end position="69"/>
    </location>
</feature>
<feature type="transmembrane region" description="Helical" evidence="2">
    <location>
        <begin position="70"/>
        <end position="90"/>
    </location>
</feature>
<feature type="topological domain" description="Cytoplasmic" evidence="1">
    <location>
        <begin position="91"/>
        <end position="104"/>
    </location>
</feature>
<feature type="transmembrane region" description="Helical" evidence="2">
    <location>
        <begin position="105"/>
        <end position="125"/>
    </location>
</feature>
<feature type="topological domain" description="Periplasmic" evidence="1">
    <location>
        <begin position="126"/>
        <end position="141"/>
    </location>
</feature>
<feature type="transmembrane region" description="Helical" evidence="2">
    <location>
        <begin position="142"/>
        <end position="162"/>
    </location>
</feature>
<feature type="topological domain" description="Cytoplasmic" evidence="1">
    <location>
        <begin position="163"/>
        <end position="200"/>
    </location>
</feature>
<feature type="transmembrane region" description="Helical" evidence="2">
    <location>
        <begin position="201"/>
        <end position="221"/>
    </location>
</feature>
<feature type="topological domain" description="Periplasmic" evidence="1">
    <location>
        <begin position="222"/>
        <end position="247"/>
    </location>
</feature>
<feature type="transmembrane region" description="Helical" evidence="2">
    <location>
        <begin position="248"/>
        <end position="268"/>
    </location>
</feature>
<feature type="topological domain" description="Cytoplasmic" evidence="1">
    <location>
        <begin position="269"/>
        <end position="291"/>
    </location>
</feature>
<feature type="domain" description="ABC transmembrane type-1" evidence="2">
    <location>
        <begin position="66"/>
        <end position="270"/>
    </location>
</feature>